<organism>
    <name type="scientific">Neisseria gonorrhoeae (strain ATCC 700825 / FA 1090)</name>
    <dbReference type="NCBI Taxonomy" id="242231"/>
    <lineage>
        <taxon>Bacteria</taxon>
        <taxon>Pseudomonadati</taxon>
        <taxon>Pseudomonadota</taxon>
        <taxon>Betaproteobacteria</taxon>
        <taxon>Neisseriales</taxon>
        <taxon>Neisseriaceae</taxon>
        <taxon>Neisseria</taxon>
    </lineage>
</organism>
<proteinExistence type="inferred from homology"/>
<keyword id="KW-0066">ATP synthesis</keyword>
<keyword id="KW-0997">Cell inner membrane</keyword>
<keyword id="KW-1003">Cell membrane</keyword>
<keyword id="KW-0139">CF(1)</keyword>
<keyword id="KW-0375">Hydrogen ion transport</keyword>
<keyword id="KW-0406">Ion transport</keyword>
<keyword id="KW-0472">Membrane</keyword>
<keyword id="KW-1185">Reference proteome</keyword>
<keyword id="KW-0813">Transport</keyword>
<name>ATPD_NEIG1</name>
<gene>
    <name evidence="1" type="primary">atpH</name>
    <name type="ordered locus">NGO_2147</name>
</gene>
<feature type="chain" id="PRO_0000371033" description="ATP synthase subunit delta">
    <location>
        <begin position="1"/>
        <end position="177"/>
    </location>
</feature>
<comment type="function">
    <text evidence="1">F(1)F(0) ATP synthase produces ATP from ADP in the presence of a proton or sodium gradient. F-type ATPases consist of two structural domains, F(1) containing the extramembraneous catalytic core and F(0) containing the membrane proton channel, linked together by a central stalk and a peripheral stalk. During catalysis, ATP synthesis in the catalytic domain of F(1) is coupled via a rotary mechanism of the central stalk subunits to proton translocation.</text>
</comment>
<comment type="function">
    <text evidence="1">This protein is part of the stalk that links CF(0) to CF(1). It either transmits conformational changes from CF(0) to CF(1) or is implicated in proton conduction.</text>
</comment>
<comment type="subunit">
    <text evidence="1">F-type ATPases have 2 components, F(1) - the catalytic core - and F(0) - the membrane proton channel. F(1) has five subunits: alpha(3), beta(3), gamma(1), delta(1), epsilon(1). F(0) has three main subunits: a(1), b(2) and c(10-14). The alpha and beta chains form an alternating ring which encloses part of the gamma chain. F(1) is attached to F(0) by a central stalk formed by the gamma and epsilon chains, while a peripheral stalk is formed by the delta and b chains.</text>
</comment>
<comment type="subcellular location">
    <subcellularLocation>
        <location evidence="1">Cell inner membrane</location>
        <topology evidence="1">Peripheral membrane protein</topology>
    </subcellularLocation>
</comment>
<comment type="similarity">
    <text evidence="1">Belongs to the ATPase delta chain family.</text>
</comment>
<dbReference type="EMBL" id="AE004969">
    <property type="protein sequence ID" value="AAW90744.1"/>
    <property type="molecule type" value="Genomic_DNA"/>
</dbReference>
<dbReference type="RefSeq" id="WP_002214793.1">
    <property type="nucleotide sequence ID" value="NC_002946.2"/>
</dbReference>
<dbReference type="RefSeq" id="YP_209156.1">
    <property type="nucleotide sequence ID" value="NC_002946.2"/>
</dbReference>
<dbReference type="SMR" id="Q5F4Z3"/>
<dbReference type="STRING" id="242231.NGO_2147"/>
<dbReference type="KEGG" id="ngo:NGO_2147"/>
<dbReference type="PATRIC" id="fig|242231.10.peg.2596"/>
<dbReference type="HOGENOM" id="CLU_085114_3_0_4"/>
<dbReference type="Proteomes" id="UP000000535">
    <property type="component" value="Chromosome"/>
</dbReference>
<dbReference type="GO" id="GO:0005886">
    <property type="term" value="C:plasma membrane"/>
    <property type="evidence" value="ECO:0007669"/>
    <property type="project" value="UniProtKB-SubCell"/>
</dbReference>
<dbReference type="GO" id="GO:0045259">
    <property type="term" value="C:proton-transporting ATP synthase complex"/>
    <property type="evidence" value="ECO:0007669"/>
    <property type="project" value="UniProtKB-KW"/>
</dbReference>
<dbReference type="GO" id="GO:0046933">
    <property type="term" value="F:proton-transporting ATP synthase activity, rotational mechanism"/>
    <property type="evidence" value="ECO:0007669"/>
    <property type="project" value="UniProtKB-UniRule"/>
</dbReference>
<dbReference type="Gene3D" id="1.10.520.20">
    <property type="entry name" value="N-terminal domain of the delta subunit of the F1F0-ATP synthase"/>
    <property type="match status" value="1"/>
</dbReference>
<dbReference type="HAMAP" id="MF_01416">
    <property type="entry name" value="ATP_synth_delta_bact"/>
    <property type="match status" value="1"/>
</dbReference>
<dbReference type="InterPro" id="IPR026015">
    <property type="entry name" value="ATP_synth_OSCP/delta_N_sf"/>
</dbReference>
<dbReference type="InterPro" id="IPR020781">
    <property type="entry name" value="ATPase_OSCP/d_CS"/>
</dbReference>
<dbReference type="InterPro" id="IPR000711">
    <property type="entry name" value="ATPase_OSCP/dsu"/>
</dbReference>
<dbReference type="NCBIfam" id="TIGR01145">
    <property type="entry name" value="ATP_synt_delta"/>
    <property type="match status" value="1"/>
</dbReference>
<dbReference type="NCBIfam" id="NF004402">
    <property type="entry name" value="PRK05758.2-2"/>
    <property type="match status" value="1"/>
</dbReference>
<dbReference type="PANTHER" id="PTHR11910">
    <property type="entry name" value="ATP SYNTHASE DELTA CHAIN"/>
    <property type="match status" value="1"/>
</dbReference>
<dbReference type="Pfam" id="PF00213">
    <property type="entry name" value="OSCP"/>
    <property type="match status" value="1"/>
</dbReference>
<dbReference type="PRINTS" id="PR00125">
    <property type="entry name" value="ATPASEDELTA"/>
</dbReference>
<dbReference type="SUPFAM" id="SSF47928">
    <property type="entry name" value="N-terminal domain of the delta subunit of the F1F0-ATP synthase"/>
    <property type="match status" value="1"/>
</dbReference>
<dbReference type="PROSITE" id="PS00389">
    <property type="entry name" value="ATPASE_DELTA"/>
    <property type="match status" value="1"/>
</dbReference>
<reference key="1">
    <citation type="submission" date="2003-03" db="EMBL/GenBank/DDBJ databases">
        <title>The complete genome sequence of Neisseria gonorrhoeae.</title>
        <authorList>
            <person name="Lewis L.A."/>
            <person name="Gillaspy A.F."/>
            <person name="McLaughlin R.E."/>
            <person name="Gipson M."/>
            <person name="Ducey T.F."/>
            <person name="Ownbey T."/>
            <person name="Hartman K."/>
            <person name="Nydick C."/>
            <person name="Carson M.B."/>
            <person name="Vaughn J."/>
            <person name="Thomson C."/>
            <person name="Song L."/>
            <person name="Lin S."/>
            <person name="Yuan X."/>
            <person name="Najar F."/>
            <person name="Zhan M."/>
            <person name="Ren Q."/>
            <person name="Zhu H."/>
            <person name="Qi S."/>
            <person name="Kenton S.M."/>
            <person name="Lai H."/>
            <person name="White J.D."/>
            <person name="Clifton S."/>
            <person name="Roe B.A."/>
            <person name="Dyer D.W."/>
        </authorList>
    </citation>
    <scope>NUCLEOTIDE SEQUENCE [LARGE SCALE GENOMIC DNA]</scope>
    <source>
        <strain>ATCC 700825 / FA 1090</strain>
    </source>
</reference>
<evidence type="ECO:0000255" key="1">
    <source>
        <dbReference type="HAMAP-Rule" id="MF_01416"/>
    </source>
</evidence>
<sequence>MAEFATIARPYAKALFGLAQEKNQIESWLGGLEKLAAVVQEGKVASLIDRPETNASEKADILIDLVGLKDKELKNFVIVLAGQKRLSILPEVYAQYQDLTLSFNHIKSAVIYSAYPLTDKQVGELAQMLNKRFDSELKISVEIEPELIGGIKVEVGDQVLDLSVQGKLSALYTTMTN</sequence>
<accession>Q5F4Z3</accession>
<protein>
    <recommendedName>
        <fullName evidence="1">ATP synthase subunit delta</fullName>
    </recommendedName>
    <alternativeName>
        <fullName evidence="1">ATP synthase F(1) sector subunit delta</fullName>
    </alternativeName>
    <alternativeName>
        <fullName evidence="1">F-type ATPase subunit delta</fullName>
        <shortName evidence="1">F-ATPase subunit delta</shortName>
    </alternativeName>
</protein>